<keyword id="KW-1003">Cell membrane</keyword>
<keyword id="KW-0406">Ion transport</keyword>
<keyword id="KW-0472">Membrane</keyword>
<keyword id="KW-0915">Sodium</keyword>
<keyword id="KW-0739">Sodium transport</keyword>
<keyword id="KW-1278">Translocase</keyword>
<keyword id="KW-0812">Transmembrane</keyword>
<keyword id="KW-1133">Transmembrane helix</keyword>
<keyword id="KW-0813">Transport</keyword>
<reference key="1">
    <citation type="journal article" date="2001" name="Nature">
        <title>Complete genome sequence of a multiple drug resistant Salmonella enterica serovar Typhi CT18.</title>
        <authorList>
            <person name="Parkhill J."/>
            <person name="Dougan G."/>
            <person name="James K.D."/>
            <person name="Thomson N.R."/>
            <person name="Pickard D."/>
            <person name="Wain J."/>
            <person name="Churcher C.M."/>
            <person name="Mungall K.L."/>
            <person name="Bentley S.D."/>
            <person name="Holden M.T.G."/>
            <person name="Sebaihia M."/>
            <person name="Baker S."/>
            <person name="Basham D."/>
            <person name="Brooks K."/>
            <person name="Chillingworth T."/>
            <person name="Connerton P."/>
            <person name="Cronin A."/>
            <person name="Davis P."/>
            <person name="Davies R.M."/>
            <person name="Dowd L."/>
            <person name="White N."/>
            <person name="Farrar J."/>
            <person name="Feltwell T."/>
            <person name="Hamlin N."/>
            <person name="Haque A."/>
            <person name="Hien T.T."/>
            <person name="Holroyd S."/>
            <person name="Jagels K."/>
            <person name="Krogh A."/>
            <person name="Larsen T.S."/>
            <person name="Leather S."/>
            <person name="Moule S."/>
            <person name="O'Gaora P."/>
            <person name="Parry C."/>
            <person name="Quail M.A."/>
            <person name="Rutherford K.M."/>
            <person name="Simmonds M."/>
            <person name="Skelton J."/>
            <person name="Stevens K."/>
            <person name="Whitehead S."/>
            <person name="Barrell B.G."/>
        </authorList>
    </citation>
    <scope>NUCLEOTIDE SEQUENCE [LARGE SCALE GENOMIC DNA]</scope>
    <source>
        <strain>CT18</strain>
    </source>
</reference>
<reference key="2">
    <citation type="journal article" date="2003" name="J. Bacteriol.">
        <title>Comparative genomics of Salmonella enterica serovar Typhi strains Ty2 and CT18.</title>
        <authorList>
            <person name="Deng W."/>
            <person name="Liou S.-R."/>
            <person name="Plunkett G. III"/>
            <person name="Mayhew G.F."/>
            <person name="Rose D.J."/>
            <person name="Burland V."/>
            <person name="Kodoyianni V."/>
            <person name="Schwartz D.C."/>
            <person name="Blattner F.R."/>
        </authorList>
    </citation>
    <scope>NUCLEOTIDE SEQUENCE [LARGE SCALE GENOMIC DNA]</scope>
    <source>
        <strain>ATCC 700931 / Ty2</strain>
    </source>
</reference>
<feature type="chain" id="PRO_0000216457" description="Oxaloacetate decarboxylase gamma chain 1">
    <location>
        <begin position="1"/>
        <end position="79"/>
    </location>
</feature>
<feature type="transmembrane region" description="Helical" evidence="2">
    <location>
        <begin position="12"/>
        <end position="32"/>
    </location>
</feature>
<accession>Q8Z9M5</accession>
<gene>
    <name type="primary">oadG1</name>
    <name type="ordered locus">STY0065</name>
    <name type="ordered locus">t0058</name>
</gene>
<protein>
    <recommendedName>
        <fullName>Oxaloacetate decarboxylase gamma chain 1</fullName>
        <ecNumber>7.2.4.2</ecNumber>
    </recommendedName>
</protein>
<evidence type="ECO:0000250" key="1"/>
<evidence type="ECO:0000255" key="2"/>
<evidence type="ECO:0000305" key="3"/>
<dbReference type="EC" id="7.2.4.2"/>
<dbReference type="EMBL" id="AL513382">
    <property type="protein sequence ID" value="CAD01211.1"/>
    <property type="molecule type" value="Genomic_DNA"/>
</dbReference>
<dbReference type="EMBL" id="AE014613">
    <property type="protein sequence ID" value="AAO67791.1"/>
    <property type="molecule type" value="Genomic_DNA"/>
</dbReference>
<dbReference type="RefSeq" id="NP_454667.1">
    <property type="nucleotide sequence ID" value="NC_003198.1"/>
</dbReference>
<dbReference type="RefSeq" id="WP_001001151.1">
    <property type="nucleotide sequence ID" value="NZ_WSUO01000005.1"/>
</dbReference>
<dbReference type="SMR" id="Q8Z9M5"/>
<dbReference type="STRING" id="220341.gene:17584113"/>
<dbReference type="KEGG" id="stt:t0058"/>
<dbReference type="KEGG" id="sty:STY0065"/>
<dbReference type="PATRIC" id="fig|220341.7.peg.65"/>
<dbReference type="eggNOG" id="COG3630">
    <property type="taxonomic scope" value="Bacteria"/>
</dbReference>
<dbReference type="HOGENOM" id="CLU_168750_3_2_6"/>
<dbReference type="OMA" id="EGINLMF"/>
<dbReference type="OrthoDB" id="5772594at2"/>
<dbReference type="Proteomes" id="UP000000541">
    <property type="component" value="Chromosome"/>
</dbReference>
<dbReference type="Proteomes" id="UP000002670">
    <property type="component" value="Chromosome"/>
</dbReference>
<dbReference type="GO" id="GO:0005886">
    <property type="term" value="C:plasma membrane"/>
    <property type="evidence" value="ECO:0007669"/>
    <property type="project" value="UniProtKB-SubCell"/>
</dbReference>
<dbReference type="GO" id="GO:0015451">
    <property type="term" value="F:decarboxylation-driven active transmembrane transporter activity"/>
    <property type="evidence" value="ECO:0007669"/>
    <property type="project" value="UniProtKB-EC"/>
</dbReference>
<dbReference type="GO" id="GO:0008948">
    <property type="term" value="F:oxaloacetate decarboxylase activity"/>
    <property type="evidence" value="ECO:0007669"/>
    <property type="project" value="UniProtKB-UniRule"/>
</dbReference>
<dbReference type="GO" id="GO:0015081">
    <property type="term" value="F:sodium ion transmembrane transporter activity"/>
    <property type="evidence" value="ECO:0007669"/>
    <property type="project" value="UniProtKB-UniRule"/>
</dbReference>
<dbReference type="GO" id="GO:0036376">
    <property type="term" value="P:sodium ion export across plasma membrane"/>
    <property type="evidence" value="ECO:0007669"/>
    <property type="project" value="InterPro"/>
</dbReference>
<dbReference type="HAMAP" id="MF_00404">
    <property type="entry name" value="OadG"/>
    <property type="match status" value="1"/>
</dbReference>
<dbReference type="InterPro" id="IPR005899">
    <property type="entry name" value="Na_pump_deCOase"/>
</dbReference>
<dbReference type="InterPro" id="IPR023424">
    <property type="entry name" value="OadG"/>
</dbReference>
<dbReference type="NCBIfam" id="TIGR01195">
    <property type="entry name" value="oadG_fam"/>
    <property type="match status" value="1"/>
</dbReference>
<dbReference type="NCBIfam" id="NF002792">
    <property type="entry name" value="PRK02919.1"/>
    <property type="match status" value="1"/>
</dbReference>
<dbReference type="Pfam" id="PF04277">
    <property type="entry name" value="OAD_gamma"/>
    <property type="match status" value="1"/>
</dbReference>
<comment type="function">
    <text evidence="1">Catalyzes the decarboxylation of oxaloacetate coupled to Na(+) translocation.</text>
</comment>
<comment type="catalytic activity">
    <reaction>
        <text>oxaloacetate + 2 Na(+)(in) + H(+) = pyruvate + 2 Na(+)(out) + CO2</text>
        <dbReference type="Rhea" id="RHEA:57724"/>
        <dbReference type="ChEBI" id="CHEBI:15361"/>
        <dbReference type="ChEBI" id="CHEBI:15378"/>
        <dbReference type="ChEBI" id="CHEBI:16452"/>
        <dbReference type="ChEBI" id="CHEBI:16526"/>
        <dbReference type="ChEBI" id="CHEBI:29101"/>
        <dbReference type="EC" id="7.2.4.2"/>
    </reaction>
</comment>
<comment type="cofactor">
    <cofactor evidence="1">
        <name>Na(+)</name>
        <dbReference type="ChEBI" id="CHEBI:29101"/>
    </cofactor>
</comment>
<comment type="subunit">
    <text evidence="1">Heterotrimer of an alpha, a beta and a gamma subunit.</text>
</comment>
<comment type="subcellular location">
    <subcellularLocation>
        <location evidence="1">Cell membrane</location>
        <topology evidence="1">Single-pass membrane protein</topology>
    </subcellularLocation>
</comment>
<comment type="similarity">
    <text evidence="3">Belongs to the OadG family.</text>
</comment>
<name>OADG1_SALTI</name>
<proteinExistence type="inferred from homology"/>
<organism>
    <name type="scientific">Salmonella typhi</name>
    <dbReference type="NCBI Taxonomy" id="90370"/>
    <lineage>
        <taxon>Bacteria</taxon>
        <taxon>Pseudomonadati</taxon>
        <taxon>Pseudomonadota</taxon>
        <taxon>Gammaproteobacteria</taxon>
        <taxon>Enterobacterales</taxon>
        <taxon>Enterobacteriaceae</taxon>
        <taxon>Salmonella</taxon>
    </lineage>
</organism>
<sequence length="79" mass="8623">MNEAVLLGEGFTLMFLGMGFVLSFLFLLIFAIRGMSAVITRFFPEPVAAPAPRAVPAVDDFTRLKPVIAAAIHHHRLNA</sequence>